<evidence type="ECO:0000255" key="1">
    <source>
        <dbReference type="HAMAP-Rule" id="MF_00480"/>
    </source>
</evidence>
<evidence type="ECO:0000305" key="2"/>
<organism>
    <name type="scientific">Campylobacter hominis (strain ATCC BAA-381 / DSM 21671 / CCUG 45161 / LMG 19568 / NCTC 13146 / CH001A)</name>
    <dbReference type="NCBI Taxonomy" id="360107"/>
    <lineage>
        <taxon>Bacteria</taxon>
        <taxon>Pseudomonadati</taxon>
        <taxon>Campylobacterota</taxon>
        <taxon>Epsilonproteobacteria</taxon>
        <taxon>Campylobacterales</taxon>
        <taxon>Campylobacteraceae</taxon>
        <taxon>Campylobacter</taxon>
    </lineage>
</organism>
<keyword id="KW-1185">Reference proteome</keyword>
<keyword id="KW-0687">Ribonucleoprotein</keyword>
<keyword id="KW-0689">Ribosomal protein</keyword>
<keyword id="KW-0694">RNA-binding</keyword>
<keyword id="KW-0699">rRNA-binding</keyword>
<keyword id="KW-0820">tRNA-binding</keyword>
<feature type="chain" id="PRO_1000014168" description="Small ribosomal subunit protein uS7">
    <location>
        <begin position="1"/>
        <end position="156"/>
    </location>
</feature>
<name>RS7_CAMHC</name>
<proteinExistence type="inferred from homology"/>
<comment type="function">
    <text evidence="1">One of the primary rRNA binding proteins, it binds directly to 16S rRNA where it nucleates assembly of the head domain of the 30S subunit. Is located at the subunit interface close to the decoding center, probably blocks exit of the E-site tRNA.</text>
</comment>
<comment type="subunit">
    <text evidence="1">Part of the 30S ribosomal subunit. Contacts proteins S9 and S11.</text>
</comment>
<comment type="similarity">
    <text evidence="1">Belongs to the universal ribosomal protein uS7 family.</text>
</comment>
<gene>
    <name evidence="1" type="primary">rpsG</name>
    <name type="ordered locus">CHAB381_1659</name>
</gene>
<reference key="1">
    <citation type="submission" date="2007-07" db="EMBL/GenBank/DDBJ databases">
        <title>Complete genome sequence of Campylobacter hominis ATCC BAA-381, a commensal isolated from the human gastrointestinal tract.</title>
        <authorList>
            <person name="Fouts D.E."/>
            <person name="Mongodin E.F."/>
            <person name="Puiu D."/>
            <person name="Sebastian Y."/>
            <person name="Miller W.G."/>
            <person name="Mandrell R.E."/>
            <person name="Nelson K.E."/>
        </authorList>
    </citation>
    <scope>NUCLEOTIDE SEQUENCE [LARGE SCALE GENOMIC DNA]</scope>
    <source>
        <strain>ATCC BAA-381 / DSM 21671 / CCUG 45161 / LMG 19568 / NCTC 13146 / CH001A</strain>
    </source>
</reference>
<sequence length="156" mass="17866">MRRRKALVREVLPDPIYGNKVITKFINSLMYDGKKSIATKIMYGAINLIDQKGGEKKGIEVFNDAIENVKPVLEVKSRRVGGATYQVPIEVRPARQQALAIRWIIAFARKRSERTMIEKLAYELLDAANSKGSSFKKKEDTYKMAEANKAFAHYRW</sequence>
<accession>A7I3T7</accession>
<dbReference type="EMBL" id="CP000776">
    <property type="protein sequence ID" value="ABS51674.1"/>
    <property type="molecule type" value="Genomic_DNA"/>
</dbReference>
<dbReference type="RefSeq" id="WP_012109484.1">
    <property type="nucleotide sequence ID" value="NC_009714.1"/>
</dbReference>
<dbReference type="SMR" id="A7I3T7"/>
<dbReference type="STRING" id="360107.CHAB381_1659"/>
<dbReference type="KEGG" id="cha:CHAB381_1659"/>
<dbReference type="eggNOG" id="COG0049">
    <property type="taxonomic scope" value="Bacteria"/>
</dbReference>
<dbReference type="HOGENOM" id="CLU_072226_1_1_7"/>
<dbReference type="OrthoDB" id="9807653at2"/>
<dbReference type="Proteomes" id="UP000002407">
    <property type="component" value="Chromosome"/>
</dbReference>
<dbReference type="GO" id="GO:0015935">
    <property type="term" value="C:small ribosomal subunit"/>
    <property type="evidence" value="ECO:0007669"/>
    <property type="project" value="InterPro"/>
</dbReference>
<dbReference type="GO" id="GO:0019843">
    <property type="term" value="F:rRNA binding"/>
    <property type="evidence" value="ECO:0007669"/>
    <property type="project" value="UniProtKB-UniRule"/>
</dbReference>
<dbReference type="GO" id="GO:0003735">
    <property type="term" value="F:structural constituent of ribosome"/>
    <property type="evidence" value="ECO:0007669"/>
    <property type="project" value="InterPro"/>
</dbReference>
<dbReference type="GO" id="GO:0000049">
    <property type="term" value="F:tRNA binding"/>
    <property type="evidence" value="ECO:0007669"/>
    <property type="project" value="UniProtKB-UniRule"/>
</dbReference>
<dbReference type="GO" id="GO:0006412">
    <property type="term" value="P:translation"/>
    <property type="evidence" value="ECO:0007669"/>
    <property type="project" value="UniProtKB-UniRule"/>
</dbReference>
<dbReference type="CDD" id="cd14869">
    <property type="entry name" value="uS7_Bacteria"/>
    <property type="match status" value="1"/>
</dbReference>
<dbReference type="FunFam" id="1.10.455.10:FF:000001">
    <property type="entry name" value="30S ribosomal protein S7"/>
    <property type="match status" value="1"/>
</dbReference>
<dbReference type="Gene3D" id="1.10.455.10">
    <property type="entry name" value="Ribosomal protein S7 domain"/>
    <property type="match status" value="1"/>
</dbReference>
<dbReference type="HAMAP" id="MF_00480_B">
    <property type="entry name" value="Ribosomal_uS7_B"/>
    <property type="match status" value="1"/>
</dbReference>
<dbReference type="InterPro" id="IPR000235">
    <property type="entry name" value="Ribosomal_uS7"/>
</dbReference>
<dbReference type="InterPro" id="IPR005717">
    <property type="entry name" value="Ribosomal_uS7_bac/org-type"/>
</dbReference>
<dbReference type="InterPro" id="IPR020606">
    <property type="entry name" value="Ribosomal_uS7_CS"/>
</dbReference>
<dbReference type="InterPro" id="IPR023798">
    <property type="entry name" value="Ribosomal_uS7_dom"/>
</dbReference>
<dbReference type="InterPro" id="IPR036823">
    <property type="entry name" value="Ribosomal_uS7_dom_sf"/>
</dbReference>
<dbReference type="NCBIfam" id="TIGR01029">
    <property type="entry name" value="rpsG_bact"/>
    <property type="match status" value="1"/>
</dbReference>
<dbReference type="PANTHER" id="PTHR11205">
    <property type="entry name" value="RIBOSOMAL PROTEIN S7"/>
    <property type="match status" value="1"/>
</dbReference>
<dbReference type="Pfam" id="PF00177">
    <property type="entry name" value="Ribosomal_S7"/>
    <property type="match status" value="1"/>
</dbReference>
<dbReference type="PIRSF" id="PIRSF002122">
    <property type="entry name" value="RPS7p_RPS7a_RPS5e_RPS7o"/>
    <property type="match status" value="1"/>
</dbReference>
<dbReference type="SUPFAM" id="SSF47973">
    <property type="entry name" value="Ribosomal protein S7"/>
    <property type="match status" value="1"/>
</dbReference>
<dbReference type="PROSITE" id="PS00052">
    <property type="entry name" value="RIBOSOMAL_S7"/>
    <property type="match status" value="1"/>
</dbReference>
<protein>
    <recommendedName>
        <fullName evidence="1">Small ribosomal subunit protein uS7</fullName>
    </recommendedName>
    <alternativeName>
        <fullName evidence="2">30S ribosomal protein S7</fullName>
    </alternativeName>
</protein>